<evidence type="ECO:0000255" key="1">
    <source>
        <dbReference type="HAMAP-Rule" id="MF_00195"/>
    </source>
</evidence>
<evidence type="ECO:0000256" key="2">
    <source>
        <dbReference type="SAM" id="MobiDB-lite"/>
    </source>
</evidence>
<sequence length="492" mass="54793">MVPVIALVGRPNVGKSTLFNRLTRSRDAIVGDLSGLTRDRQYGEAKWQGRTYIVIDTGGISGDEEGIDAKMAEQSLQAIEEADAVLFLVDARAGMTASDQMIGEHLRRRNKRSFLVVNKVDNLDVDLARAEFSPMGLGEPLAIAGAHGRGITQMLEAVLGIFPKDAGEPEEGAEAEEEVQEGQEAKRIPGPSEKDGIKLAIIGRPNVGKSTLVNRMLGEERVIVYDQAGTTRDSIYIPFERDDEKYTLIDTAGVRRRGKIFEAVEKFSVVKTLQAIQDSNVVVFVMDAREGVVDHDLNLLGFVLESGRALVIALNKWDGMDQGQKDYVKTELERRLFFVDFADIHFISALHGTGVGHLYKSVQAAFHSAVTRWPTSRLTQILEDAVSDHAPPLVNGRRIKLRYAHLGGANPPLIVIHGNQVDAVPRAYTRYLENTFRRVLKLVGTPIRIEYKGGENPYEGNKNKLTDRQVNKKRRLMSHHKKAEKKRKDKRK</sequence>
<gene>
    <name evidence="1" type="primary">der</name>
    <name type="synonym">engA</name>
    <name type="ordered locus">Pmen_3496</name>
</gene>
<accession>A4XY28</accession>
<feature type="chain" id="PRO_1000011703" description="GTPase Der">
    <location>
        <begin position="1"/>
        <end position="492"/>
    </location>
</feature>
<feature type="domain" description="EngA-type G 1">
    <location>
        <begin position="3"/>
        <end position="166"/>
    </location>
</feature>
<feature type="domain" description="EngA-type G 2">
    <location>
        <begin position="197"/>
        <end position="370"/>
    </location>
</feature>
<feature type="domain" description="KH-like" evidence="1">
    <location>
        <begin position="371"/>
        <end position="455"/>
    </location>
</feature>
<feature type="region of interest" description="Disordered" evidence="2">
    <location>
        <begin position="166"/>
        <end position="190"/>
    </location>
</feature>
<feature type="region of interest" description="Disordered" evidence="2">
    <location>
        <begin position="453"/>
        <end position="492"/>
    </location>
</feature>
<feature type="compositionally biased region" description="Acidic residues" evidence="2">
    <location>
        <begin position="168"/>
        <end position="181"/>
    </location>
</feature>
<feature type="compositionally biased region" description="Basic and acidic residues" evidence="2">
    <location>
        <begin position="461"/>
        <end position="470"/>
    </location>
</feature>
<feature type="compositionally biased region" description="Basic residues" evidence="2">
    <location>
        <begin position="471"/>
        <end position="492"/>
    </location>
</feature>
<feature type="binding site" evidence="1">
    <location>
        <begin position="9"/>
        <end position="16"/>
    </location>
    <ligand>
        <name>GTP</name>
        <dbReference type="ChEBI" id="CHEBI:37565"/>
        <label>1</label>
    </ligand>
</feature>
<feature type="binding site" evidence="1">
    <location>
        <begin position="56"/>
        <end position="60"/>
    </location>
    <ligand>
        <name>GTP</name>
        <dbReference type="ChEBI" id="CHEBI:37565"/>
        <label>1</label>
    </ligand>
</feature>
<feature type="binding site" evidence="1">
    <location>
        <begin position="118"/>
        <end position="121"/>
    </location>
    <ligand>
        <name>GTP</name>
        <dbReference type="ChEBI" id="CHEBI:37565"/>
        <label>1</label>
    </ligand>
</feature>
<feature type="binding site" evidence="1">
    <location>
        <begin position="203"/>
        <end position="210"/>
    </location>
    <ligand>
        <name>GTP</name>
        <dbReference type="ChEBI" id="CHEBI:37565"/>
        <label>2</label>
    </ligand>
</feature>
<feature type="binding site" evidence="1">
    <location>
        <begin position="250"/>
        <end position="254"/>
    </location>
    <ligand>
        <name>GTP</name>
        <dbReference type="ChEBI" id="CHEBI:37565"/>
        <label>2</label>
    </ligand>
</feature>
<feature type="binding site" evidence="1">
    <location>
        <begin position="315"/>
        <end position="318"/>
    </location>
    <ligand>
        <name>GTP</name>
        <dbReference type="ChEBI" id="CHEBI:37565"/>
        <label>2</label>
    </ligand>
</feature>
<reference key="1">
    <citation type="submission" date="2007-04" db="EMBL/GenBank/DDBJ databases">
        <title>Complete sequence of Pseudomonas mendocina ymp.</title>
        <authorList>
            <consortium name="US DOE Joint Genome Institute"/>
            <person name="Copeland A."/>
            <person name="Lucas S."/>
            <person name="Lapidus A."/>
            <person name="Barry K."/>
            <person name="Glavina del Rio T."/>
            <person name="Dalin E."/>
            <person name="Tice H."/>
            <person name="Pitluck S."/>
            <person name="Kiss H."/>
            <person name="Brettin T."/>
            <person name="Detter J.C."/>
            <person name="Bruce D."/>
            <person name="Han C."/>
            <person name="Schmutz J."/>
            <person name="Larimer F."/>
            <person name="Land M."/>
            <person name="Hauser L."/>
            <person name="Kyrpides N."/>
            <person name="Mikhailova N."/>
            <person name="Hersman L."/>
            <person name="Dubois J."/>
            <person name="Maurice P."/>
            <person name="Richardson P."/>
        </authorList>
    </citation>
    <scope>NUCLEOTIDE SEQUENCE [LARGE SCALE GENOMIC DNA]</scope>
    <source>
        <strain>ymp</strain>
    </source>
</reference>
<protein>
    <recommendedName>
        <fullName evidence="1">GTPase Der</fullName>
    </recommendedName>
    <alternativeName>
        <fullName evidence="1">GTP-binding protein EngA</fullName>
    </alternativeName>
</protein>
<keyword id="KW-0342">GTP-binding</keyword>
<keyword id="KW-0547">Nucleotide-binding</keyword>
<keyword id="KW-0677">Repeat</keyword>
<keyword id="KW-0690">Ribosome biogenesis</keyword>
<dbReference type="EMBL" id="CP000680">
    <property type="protein sequence ID" value="ABP86244.1"/>
    <property type="molecule type" value="Genomic_DNA"/>
</dbReference>
<dbReference type="SMR" id="A4XY28"/>
<dbReference type="STRING" id="399739.Pmen_3496"/>
<dbReference type="KEGG" id="pmy:Pmen_3496"/>
<dbReference type="PATRIC" id="fig|399739.8.peg.3542"/>
<dbReference type="eggNOG" id="COG1160">
    <property type="taxonomic scope" value="Bacteria"/>
</dbReference>
<dbReference type="HOGENOM" id="CLU_016077_6_2_6"/>
<dbReference type="OrthoDB" id="9805918at2"/>
<dbReference type="GO" id="GO:0005525">
    <property type="term" value="F:GTP binding"/>
    <property type="evidence" value="ECO:0007669"/>
    <property type="project" value="UniProtKB-UniRule"/>
</dbReference>
<dbReference type="GO" id="GO:0043022">
    <property type="term" value="F:ribosome binding"/>
    <property type="evidence" value="ECO:0007669"/>
    <property type="project" value="TreeGrafter"/>
</dbReference>
<dbReference type="GO" id="GO:0042254">
    <property type="term" value="P:ribosome biogenesis"/>
    <property type="evidence" value="ECO:0007669"/>
    <property type="project" value="UniProtKB-KW"/>
</dbReference>
<dbReference type="CDD" id="cd01894">
    <property type="entry name" value="EngA1"/>
    <property type="match status" value="1"/>
</dbReference>
<dbReference type="CDD" id="cd01895">
    <property type="entry name" value="EngA2"/>
    <property type="match status" value="1"/>
</dbReference>
<dbReference type="FunFam" id="3.30.300.20:FF:000004">
    <property type="entry name" value="GTPase Der"/>
    <property type="match status" value="1"/>
</dbReference>
<dbReference type="FunFam" id="3.40.50.300:FF:000040">
    <property type="entry name" value="GTPase Der"/>
    <property type="match status" value="1"/>
</dbReference>
<dbReference type="FunFam" id="3.40.50.300:FF:000057">
    <property type="entry name" value="GTPase Der"/>
    <property type="match status" value="1"/>
</dbReference>
<dbReference type="Gene3D" id="3.30.300.20">
    <property type="match status" value="1"/>
</dbReference>
<dbReference type="Gene3D" id="3.40.50.300">
    <property type="entry name" value="P-loop containing nucleotide triphosphate hydrolases"/>
    <property type="match status" value="2"/>
</dbReference>
<dbReference type="HAMAP" id="MF_00195">
    <property type="entry name" value="GTPase_Der"/>
    <property type="match status" value="1"/>
</dbReference>
<dbReference type="InterPro" id="IPR031166">
    <property type="entry name" value="G_ENGA"/>
</dbReference>
<dbReference type="InterPro" id="IPR006073">
    <property type="entry name" value="GTP-bd"/>
</dbReference>
<dbReference type="InterPro" id="IPR016484">
    <property type="entry name" value="GTPase_Der"/>
</dbReference>
<dbReference type="InterPro" id="IPR032859">
    <property type="entry name" value="KH_dom-like"/>
</dbReference>
<dbReference type="InterPro" id="IPR015946">
    <property type="entry name" value="KH_dom-like_a/b"/>
</dbReference>
<dbReference type="InterPro" id="IPR027417">
    <property type="entry name" value="P-loop_NTPase"/>
</dbReference>
<dbReference type="InterPro" id="IPR005225">
    <property type="entry name" value="Small_GTP-bd"/>
</dbReference>
<dbReference type="NCBIfam" id="TIGR03594">
    <property type="entry name" value="GTPase_EngA"/>
    <property type="match status" value="1"/>
</dbReference>
<dbReference type="NCBIfam" id="TIGR00231">
    <property type="entry name" value="small_GTP"/>
    <property type="match status" value="2"/>
</dbReference>
<dbReference type="PANTHER" id="PTHR43834">
    <property type="entry name" value="GTPASE DER"/>
    <property type="match status" value="1"/>
</dbReference>
<dbReference type="PANTHER" id="PTHR43834:SF6">
    <property type="entry name" value="GTPASE DER"/>
    <property type="match status" value="1"/>
</dbReference>
<dbReference type="Pfam" id="PF14714">
    <property type="entry name" value="KH_dom-like"/>
    <property type="match status" value="1"/>
</dbReference>
<dbReference type="Pfam" id="PF01926">
    <property type="entry name" value="MMR_HSR1"/>
    <property type="match status" value="2"/>
</dbReference>
<dbReference type="PIRSF" id="PIRSF006485">
    <property type="entry name" value="GTP-binding_EngA"/>
    <property type="match status" value="1"/>
</dbReference>
<dbReference type="PRINTS" id="PR00326">
    <property type="entry name" value="GTP1OBG"/>
</dbReference>
<dbReference type="SUPFAM" id="SSF52540">
    <property type="entry name" value="P-loop containing nucleoside triphosphate hydrolases"/>
    <property type="match status" value="2"/>
</dbReference>
<dbReference type="PROSITE" id="PS51712">
    <property type="entry name" value="G_ENGA"/>
    <property type="match status" value="2"/>
</dbReference>
<comment type="function">
    <text evidence="1">GTPase that plays an essential role in the late steps of ribosome biogenesis.</text>
</comment>
<comment type="subunit">
    <text evidence="1">Associates with the 50S ribosomal subunit.</text>
</comment>
<comment type="similarity">
    <text evidence="1">Belongs to the TRAFAC class TrmE-Era-EngA-EngB-Septin-like GTPase superfamily. EngA (Der) GTPase family.</text>
</comment>
<name>DER_ECTM1</name>
<proteinExistence type="inferred from homology"/>
<organism>
    <name type="scientific">Ectopseudomonas mendocina (strain ymp)</name>
    <name type="common">Pseudomonas mendocina</name>
    <dbReference type="NCBI Taxonomy" id="399739"/>
    <lineage>
        <taxon>Bacteria</taxon>
        <taxon>Pseudomonadati</taxon>
        <taxon>Pseudomonadota</taxon>
        <taxon>Gammaproteobacteria</taxon>
        <taxon>Pseudomonadales</taxon>
        <taxon>Pseudomonadaceae</taxon>
        <taxon>Ectopseudomonas</taxon>
    </lineage>
</organism>